<dbReference type="EMBL" id="AE004969">
    <property type="protein sequence ID" value="AAW88774.1"/>
    <property type="molecule type" value="Genomic_DNA"/>
</dbReference>
<dbReference type="RefSeq" id="WP_003687194.1">
    <property type="nucleotide sequence ID" value="NC_002946.2"/>
</dbReference>
<dbReference type="RefSeq" id="YP_207186.1">
    <property type="nucleotide sequence ID" value="NC_002946.2"/>
</dbReference>
<dbReference type="SMR" id="Q5FAJ2"/>
<dbReference type="STRING" id="242231.NGO_0001"/>
<dbReference type="GeneID" id="66752266"/>
<dbReference type="KEGG" id="ngo:NGO_0001"/>
<dbReference type="PATRIC" id="fig|242231.10.peg.1"/>
<dbReference type="HOGENOM" id="CLU_026910_0_1_4"/>
<dbReference type="Proteomes" id="UP000000535">
    <property type="component" value="Chromosome"/>
</dbReference>
<dbReference type="GO" id="GO:0005737">
    <property type="term" value="C:cytoplasm"/>
    <property type="evidence" value="ECO:0007669"/>
    <property type="project" value="UniProtKB-SubCell"/>
</dbReference>
<dbReference type="GO" id="GO:0005886">
    <property type="term" value="C:plasma membrane"/>
    <property type="evidence" value="ECO:0007669"/>
    <property type="project" value="TreeGrafter"/>
</dbReference>
<dbReference type="GO" id="GO:0005524">
    <property type="term" value="F:ATP binding"/>
    <property type="evidence" value="ECO:0007669"/>
    <property type="project" value="UniProtKB-UniRule"/>
</dbReference>
<dbReference type="GO" id="GO:0016887">
    <property type="term" value="F:ATP hydrolysis activity"/>
    <property type="evidence" value="ECO:0007669"/>
    <property type="project" value="InterPro"/>
</dbReference>
<dbReference type="GO" id="GO:0003688">
    <property type="term" value="F:DNA replication origin binding"/>
    <property type="evidence" value="ECO:0007669"/>
    <property type="project" value="UniProtKB-UniRule"/>
</dbReference>
<dbReference type="GO" id="GO:0008289">
    <property type="term" value="F:lipid binding"/>
    <property type="evidence" value="ECO:0007669"/>
    <property type="project" value="UniProtKB-KW"/>
</dbReference>
<dbReference type="GO" id="GO:0006270">
    <property type="term" value="P:DNA replication initiation"/>
    <property type="evidence" value="ECO:0007669"/>
    <property type="project" value="UniProtKB-UniRule"/>
</dbReference>
<dbReference type="GO" id="GO:0006275">
    <property type="term" value="P:regulation of DNA replication"/>
    <property type="evidence" value="ECO:0007669"/>
    <property type="project" value="UniProtKB-UniRule"/>
</dbReference>
<dbReference type="CDD" id="cd00009">
    <property type="entry name" value="AAA"/>
    <property type="match status" value="1"/>
</dbReference>
<dbReference type="CDD" id="cd06571">
    <property type="entry name" value="Bac_DnaA_C"/>
    <property type="match status" value="1"/>
</dbReference>
<dbReference type="FunFam" id="1.10.1750.10:FF:000006">
    <property type="entry name" value="Chromosomal replication initiator protein DnaA"/>
    <property type="match status" value="1"/>
</dbReference>
<dbReference type="FunFam" id="1.10.8.60:FF:000003">
    <property type="entry name" value="Chromosomal replication initiator protein DnaA"/>
    <property type="match status" value="1"/>
</dbReference>
<dbReference type="FunFam" id="3.40.50.300:FF:000668">
    <property type="entry name" value="Chromosomal replication initiator protein DnaA"/>
    <property type="match status" value="1"/>
</dbReference>
<dbReference type="Gene3D" id="1.10.1750.10">
    <property type="match status" value="1"/>
</dbReference>
<dbReference type="Gene3D" id="1.10.8.60">
    <property type="match status" value="1"/>
</dbReference>
<dbReference type="Gene3D" id="3.30.300.180">
    <property type="match status" value="1"/>
</dbReference>
<dbReference type="Gene3D" id="3.40.50.300">
    <property type="entry name" value="P-loop containing nucleotide triphosphate hydrolases"/>
    <property type="match status" value="1"/>
</dbReference>
<dbReference type="HAMAP" id="MF_00377">
    <property type="entry name" value="DnaA_bact"/>
    <property type="match status" value="1"/>
</dbReference>
<dbReference type="InterPro" id="IPR003593">
    <property type="entry name" value="AAA+_ATPase"/>
</dbReference>
<dbReference type="InterPro" id="IPR001957">
    <property type="entry name" value="Chromosome_initiator_DnaA"/>
</dbReference>
<dbReference type="InterPro" id="IPR020591">
    <property type="entry name" value="Chromosome_initiator_DnaA-like"/>
</dbReference>
<dbReference type="InterPro" id="IPR018312">
    <property type="entry name" value="Chromosome_initiator_DnaA_CS"/>
</dbReference>
<dbReference type="InterPro" id="IPR013159">
    <property type="entry name" value="DnaA_C"/>
</dbReference>
<dbReference type="InterPro" id="IPR013317">
    <property type="entry name" value="DnaA_dom"/>
</dbReference>
<dbReference type="InterPro" id="IPR024633">
    <property type="entry name" value="DnaA_N_dom"/>
</dbReference>
<dbReference type="InterPro" id="IPR038454">
    <property type="entry name" value="DnaA_N_sf"/>
</dbReference>
<dbReference type="InterPro" id="IPR027417">
    <property type="entry name" value="P-loop_NTPase"/>
</dbReference>
<dbReference type="InterPro" id="IPR010921">
    <property type="entry name" value="Trp_repressor/repl_initiator"/>
</dbReference>
<dbReference type="NCBIfam" id="TIGR00362">
    <property type="entry name" value="DnaA"/>
    <property type="match status" value="1"/>
</dbReference>
<dbReference type="PANTHER" id="PTHR30050">
    <property type="entry name" value="CHROMOSOMAL REPLICATION INITIATOR PROTEIN DNAA"/>
    <property type="match status" value="1"/>
</dbReference>
<dbReference type="PANTHER" id="PTHR30050:SF2">
    <property type="entry name" value="CHROMOSOMAL REPLICATION INITIATOR PROTEIN DNAA"/>
    <property type="match status" value="1"/>
</dbReference>
<dbReference type="Pfam" id="PF00308">
    <property type="entry name" value="Bac_DnaA"/>
    <property type="match status" value="1"/>
</dbReference>
<dbReference type="Pfam" id="PF08299">
    <property type="entry name" value="Bac_DnaA_C"/>
    <property type="match status" value="1"/>
</dbReference>
<dbReference type="Pfam" id="PF11638">
    <property type="entry name" value="DnaA_N"/>
    <property type="match status" value="1"/>
</dbReference>
<dbReference type="PRINTS" id="PR00051">
    <property type="entry name" value="DNAA"/>
</dbReference>
<dbReference type="SMART" id="SM00382">
    <property type="entry name" value="AAA"/>
    <property type="match status" value="1"/>
</dbReference>
<dbReference type="SMART" id="SM00760">
    <property type="entry name" value="Bac_DnaA_C"/>
    <property type="match status" value="1"/>
</dbReference>
<dbReference type="SUPFAM" id="SSF52540">
    <property type="entry name" value="P-loop containing nucleoside triphosphate hydrolases"/>
    <property type="match status" value="1"/>
</dbReference>
<dbReference type="SUPFAM" id="SSF48295">
    <property type="entry name" value="TrpR-like"/>
    <property type="match status" value="1"/>
</dbReference>
<dbReference type="PROSITE" id="PS01008">
    <property type="entry name" value="DNAA"/>
    <property type="match status" value="1"/>
</dbReference>
<sequence>MTLAEFWPLCLRRLHDMLPHGQFAQWIAPLTVGEEGGVWVVYGKNQFACNMLKSQFAGKIEAVREELAAGRPAFVFKPGEGVRYEMAAVEGAVEPAEPSLHAGSEEMPVQEVLLDELPSEKPVKPAASKTAADILAERMKNLPHEPRQAAGPASRPESAAVAKARTDAQRDAEEARYEQTNLSPDYTFDTLVEGKGNRLAAAAAQAIAENPGQSYNPFFLYGSTGLGKTHLVQAVGNELLKNRPDAKVRYMHSDDYIRSFMKAVRNNTYDVFKQQYKQYDLLIIDDIQFIKGKDRTMEEFFYLYNHFHNEKKQLILTCDVLPAKIEGMDDRLKSRFSWGLTLELEPPELEMRIAILQKKAEAAGISIEDEAALFIANLIRSNVRELEGAFNRVGASSRFMNRPVIDIDLARTALQDIIAEKHKVITADIIIDAVAKYYRIKISDVLGKKRTRNIARPRQVAMSLTKELTTLSLPSIGDSFGGRDHTTVMHGIRAVAKLREEDPELAQDYEKLLILIQN</sequence>
<gene>
    <name evidence="1" type="primary">dnaA</name>
    <name type="ordered locus">NGO_0001</name>
</gene>
<accession>Q5FAJ2</accession>
<protein>
    <recommendedName>
        <fullName evidence="1">Chromosomal replication initiator protein DnaA</fullName>
    </recommendedName>
</protein>
<name>DNAA_NEIG1</name>
<reference key="1">
    <citation type="submission" date="2003-03" db="EMBL/GenBank/DDBJ databases">
        <title>The complete genome sequence of Neisseria gonorrhoeae.</title>
        <authorList>
            <person name="Lewis L.A."/>
            <person name="Gillaspy A.F."/>
            <person name="McLaughlin R.E."/>
            <person name="Gipson M."/>
            <person name="Ducey T.F."/>
            <person name="Ownbey T."/>
            <person name="Hartman K."/>
            <person name="Nydick C."/>
            <person name="Carson M.B."/>
            <person name="Vaughn J."/>
            <person name="Thomson C."/>
            <person name="Song L."/>
            <person name="Lin S."/>
            <person name="Yuan X."/>
            <person name="Najar F."/>
            <person name="Zhan M."/>
            <person name="Ren Q."/>
            <person name="Zhu H."/>
            <person name="Qi S."/>
            <person name="Kenton S.M."/>
            <person name="Lai H."/>
            <person name="White J.D."/>
            <person name="Clifton S."/>
            <person name="Roe B.A."/>
            <person name="Dyer D.W."/>
        </authorList>
    </citation>
    <scope>NUCLEOTIDE SEQUENCE [LARGE SCALE GENOMIC DNA]</scope>
    <source>
        <strain>ATCC 700825 / FA 1090</strain>
    </source>
</reference>
<proteinExistence type="inferred from homology"/>
<evidence type="ECO:0000255" key="1">
    <source>
        <dbReference type="HAMAP-Rule" id="MF_00377"/>
    </source>
</evidence>
<evidence type="ECO:0000256" key="2">
    <source>
        <dbReference type="SAM" id="MobiDB-lite"/>
    </source>
</evidence>
<feature type="chain" id="PRO_0000114219" description="Chromosomal replication initiator protein DnaA">
    <location>
        <begin position="1"/>
        <end position="518"/>
    </location>
</feature>
<feature type="region of interest" description="Domain I, interacts with DnaA modulators" evidence="1">
    <location>
        <begin position="1"/>
        <end position="73"/>
    </location>
</feature>
<feature type="region of interest" description="Domain II" evidence="1">
    <location>
        <begin position="73"/>
        <end position="180"/>
    </location>
</feature>
<feature type="region of interest" description="Disordered" evidence="2">
    <location>
        <begin position="144"/>
        <end position="180"/>
    </location>
</feature>
<feature type="region of interest" description="Domain III, AAA+ region" evidence="1">
    <location>
        <begin position="181"/>
        <end position="397"/>
    </location>
</feature>
<feature type="region of interest" description="Domain IV, binds dsDNA" evidence="1">
    <location>
        <begin position="398"/>
        <end position="518"/>
    </location>
</feature>
<feature type="compositionally biased region" description="Basic and acidic residues" evidence="2">
    <location>
        <begin position="164"/>
        <end position="177"/>
    </location>
</feature>
<feature type="binding site" evidence="1">
    <location>
        <position position="225"/>
    </location>
    <ligand>
        <name>ATP</name>
        <dbReference type="ChEBI" id="CHEBI:30616"/>
    </ligand>
</feature>
<feature type="binding site" evidence="1">
    <location>
        <position position="227"/>
    </location>
    <ligand>
        <name>ATP</name>
        <dbReference type="ChEBI" id="CHEBI:30616"/>
    </ligand>
</feature>
<feature type="binding site" evidence="1">
    <location>
        <position position="228"/>
    </location>
    <ligand>
        <name>ATP</name>
        <dbReference type="ChEBI" id="CHEBI:30616"/>
    </ligand>
</feature>
<feature type="binding site" evidence="1">
    <location>
        <position position="229"/>
    </location>
    <ligand>
        <name>ATP</name>
        <dbReference type="ChEBI" id="CHEBI:30616"/>
    </ligand>
</feature>
<keyword id="KW-0067">ATP-binding</keyword>
<keyword id="KW-0963">Cytoplasm</keyword>
<keyword id="KW-0235">DNA replication</keyword>
<keyword id="KW-0238">DNA-binding</keyword>
<keyword id="KW-0446">Lipid-binding</keyword>
<keyword id="KW-0547">Nucleotide-binding</keyword>
<keyword id="KW-1185">Reference proteome</keyword>
<organism>
    <name type="scientific">Neisseria gonorrhoeae (strain ATCC 700825 / FA 1090)</name>
    <dbReference type="NCBI Taxonomy" id="242231"/>
    <lineage>
        <taxon>Bacteria</taxon>
        <taxon>Pseudomonadati</taxon>
        <taxon>Pseudomonadota</taxon>
        <taxon>Betaproteobacteria</taxon>
        <taxon>Neisseriales</taxon>
        <taxon>Neisseriaceae</taxon>
        <taxon>Neisseria</taxon>
    </lineage>
</organism>
<comment type="function">
    <text evidence="1">Plays an essential role in the initiation and regulation of chromosomal replication. ATP-DnaA binds to the origin of replication (oriC) to initiate formation of the DNA replication initiation complex once per cell cycle. Binds the DnaA box (a 9 base pair repeat at the origin) and separates the double-stranded (ds)DNA. Forms a right-handed helical filament on oriC DNA; dsDNA binds to the exterior of the filament while single-stranded (ss)DNA is stabiized in the filament's interior. The ATP-DnaA-oriC complex binds and stabilizes one strand of the AT-rich DNA unwinding element (DUE), permitting loading of DNA polymerase. After initiation quickly degrades to an ADP-DnaA complex that is not apt for DNA replication. Binds acidic phospholipids.</text>
</comment>
<comment type="subunit">
    <text evidence="1">Oligomerizes as a right-handed, spiral filament on DNA at oriC.</text>
</comment>
<comment type="subcellular location">
    <subcellularLocation>
        <location evidence="1">Cytoplasm</location>
    </subcellularLocation>
</comment>
<comment type="domain">
    <text evidence="1">Domain I is involved in oligomerization and binding regulators, domain II is flexibile and of varying length in different bacteria, domain III forms the AAA+ region, while domain IV binds dsDNA.</text>
</comment>
<comment type="similarity">
    <text evidence="1">Belongs to the DnaA family.</text>
</comment>